<comment type="function">
    <text evidence="1">Methyltransferase involved in ribosomal biogenesis. Specifically catalyzes the N1-methylation of the pseudouridine corresponding to position 914 in M.jannaschii 16S rRNA.</text>
</comment>
<comment type="catalytic activity">
    <reaction evidence="1">
        <text>a pseudouridine in rRNA + S-adenosyl-L-methionine = an N(1)-methylpseudouridine in rRNA + S-adenosyl-L-homocysteine + H(+)</text>
        <dbReference type="Rhea" id="RHEA:46696"/>
        <dbReference type="Rhea" id="RHEA-COMP:11634"/>
        <dbReference type="Rhea" id="RHEA-COMP:13933"/>
        <dbReference type="ChEBI" id="CHEBI:15378"/>
        <dbReference type="ChEBI" id="CHEBI:57856"/>
        <dbReference type="ChEBI" id="CHEBI:59789"/>
        <dbReference type="ChEBI" id="CHEBI:65314"/>
        <dbReference type="ChEBI" id="CHEBI:74890"/>
    </reaction>
</comment>
<comment type="subunit">
    <text evidence="1">Homodimer.</text>
</comment>
<comment type="similarity">
    <text evidence="2">Belongs to the class IV-like SAM-binding methyltransferase superfamily. RNA methyltransferase NEP1 family.</text>
</comment>
<organism>
    <name type="scientific">Thermococcus kodakarensis (strain ATCC BAA-918 / JCM 12380 / KOD1)</name>
    <name type="common">Pyrococcus kodakaraensis (strain KOD1)</name>
    <dbReference type="NCBI Taxonomy" id="69014"/>
    <lineage>
        <taxon>Archaea</taxon>
        <taxon>Methanobacteriati</taxon>
        <taxon>Methanobacteriota</taxon>
        <taxon>Thermococci</taxon>
        <taxon>Thermococcales</taxon>
        <taxon>Thermococcaceae</taxon>
        <taxon>Thermococcus</taxon>
    </lineage>
</organism>
<sequence>MLHLIIAEAELELVPESIRDHPAVVNYARRRKKRPEEAILDSTYHHAALKKLPDGDRRGRPDIVHICLLNALESIANKEGFLRVYVHTRNDEVIHIKPETRLPRNYNRFLGLMESLFKKGAVPEGLELLRIEKKPLESLIEDINPDTVFIMHEEGELIRPRSFGEILASHQNPVVVVGGFPHGDFMRPIEGTKVSLYREPLMAWTVVSEVIVNFEAALGL</sequence>
<reference key="1">
    <citation type="journal article" date="2005" name="Genome Res.">
        <title>Complete genome sequence of the hyperthermophilic archaeon Thermococcus kodakaraensis KOD1 and comparison with Pyrococcus genomes.</title>
        <authorList>
            <person name="Fukui T."/>
            <person name="Atomi H."/>
            <person name="Kanai T."/>
            <person name="Matsumi R."/>
            <person name="Fujiwara S."/>
            <person name="Imanaka T."/>
        </authorList>
    </citation>
    <scope>NUCLEOTIDE SEQUENCE [LARGE SCALE GENOMIC DNA]</scope>
    <source>
        <strain>ATCC BAA-918 / JCM 12380 / KOD1</strain>
    </source>
</reference>
<gene>
    <name evidence="1" type="primary">nep1</name>
    <name type="ordered locus">TK0876</name>
</gene>
<feature type="chain" id="PRO_0000158621" description="Ribosomal RNA small subunit methyltransferase Nep1">
    <location>
        <begin position="1"/>
        <end position="220"/>
    </location>
</feature>
<feature type="binding site" evidence="1">
    <location>
        <position position="178"/>
    </location>
    <ligand>
        <name>S-adenosyl-L-methionine</name>
        <dbReference type="ChEBI" id="CHEBI:59789"/>
    </ligand>
</feature>
<feature type="binding site" evidence="1">
    <location>
        <position position="183"/>
    </location>
    <ligand>
        <name>S-adenosyl-L-methionine</name>
        <dbReference type="ChEBI" id="CHEBI:59789"/>
    </ligand>
</feature>
<feature type="binding site" evidence="1">
    <location>
        <begin position="196"/>
        <end position="201"/>
    </location>
    <ligand>
        <name>S-adenosyl-L-methionine</name>
        <dbReference type="ChEBI" id="CHEBI:59789"/>
    </ligand>
</feature>
<feature type="site" description="Interaction with substrate rRNA" evidence="1">
    <location>
        <position position="60"/>
    </location>
</feature>
<feature type="site" description="Stabilizes Arg-60" evidence="1">
    <location>
        <position position="62"/>
    </location>
</feature>
<feature type="site" description="Interaction with substrate rRNA" evidence="1">
    <location>
        <position position="101"/>
    </location>
</feature>
<feature type="site" description="Interaction with substrate rRNA" evidence="1">
    <location>
        <position position="104"/>
    </location>
</feature>
<feature type="site" description="Interaction with substrate rRNA" evidence="1">
    <location>
        <position position="108"/>
    </location>
</feature>
<dbReference type="EC" id="2.1.1.-" evidence="1"/>
<dbReference type="EMBL" id="AP006878">
    <property type="protein sequence ID" value="BAD85065.1"/>
    <property type="molecule type" value="Genomic_DNA"/>
</dbReference>
<dbReference type="RefSeq" id="WP_011249827.1">
    <property type="nucleotide sequence ID" value="NC_006624.1"/>
</dbReference>
<dbReference type="SMR" id="Q5JI44"/>
<dbReference type="FunCoup" id="Q5JI44">
    <property type="interactions" value="129"/>
</dbReference>
<dbReference type="STRING" id="69014.TK0876"/>
<dbReference type="EnsemblBacteria" id="BAD85065">
    <property type="protein sequence ID" value="BAD85065"/>
    <property type="gene ID" value="TK0876"/>
</dbReference>
<dbReference type="GeneID" id="78447391"/>
<dbReference type="KEGG" id="tko:TK0876"/>
<dbReference type="PATRIC" id="fig|69014.16.peg.855"/>
<dbReference type="eggNOG" id="arCOG04122">
    <property type="taxonomic scope" value="Archaea"/>
</dbReference>
<dbReference type="HOGENOM" id="CLU_055846_1_3_2"/>
<dbReference type="InParanoid" id="Q5JI44"/>
<dbReference type="OrthoDB" id="7612at2157"/>
<dbReference type="PhylomeDB" id="Q5JI44"/>
<dbReference type="Proteomes" id="UP000000536">
    <property type="component" value="Chromosome"/>
</dbReference>
<dbReference type="GO" id="GO:0070037">
    <property type="term" value="F:rRNA (pseudouridine) methyltransferase activity"/>
    <property type="evidence" value="ECO:0000318"/>
    <property type="project" value="GO_Central"/>
</dbReference>
<dbReference type="GO" id="GO:0019843">
    <property type="term" value="F:rRNA binding"/>
    <property type="evidence" value="ECO:0000318"/>
    <property type="project" value="GO_Central"/>
</dbReference>
<dbReference type="GO" id="GO:0070475">
    <property type="term" value="P:rRNA base methylation"/>
    <property type="evidence" value="ECO:0000318"/>
    <property type="project" value="GO_Central"/>
</dbReference>
<dbReference type="CDD" id="cd18088">
    <property type="entry name" value="Nep1-like"/>
    <property type="match status" value="1"/>
</dbReference>
<dbReference type="FunFam" id="3.40.1280.10:FF:000042">
    <property type="entry name" value="Ribosomal RNA small subunit methyltransferase Nep1"/>
    <property type="match status" value="1"/>
</dbReference>
<dbReference type="Gene3D" id="3.40.1280.10">
    <property type="match status" value="1"/>
</dbReference>
<dbReference type="HAMAP" id="MF_00554">
    <property type="entry name" value="NEP1"/>
    <property type="match status" value="1"/>
</dbReference>
<dbReference type="InterPro" id="IPR029028">
    <property type="entry name" value="Alpha/beta_knot_MTases"/>
</dbReference>
<dbReference type="InterPro" id="IPR005304">
    <property type="entry name" value="Rbsml_bgen_MeTrfase_EMG1/NEP1"/>
</dbReference>
<dbReference type="InterPro" id="IPR023503">
    <property type="entry name" value="Ribosome_NEP1_arc"/>
</dbReference>
<dbReference type="InterPro" id="IPR029026">
    <property type="entry name" value="tRNA_m1G_MTases_N"/>
</dbReference>
<dbReference type="NCBIfam" id="NF003205">
    <property type="entry name" value="PRK04171.1-5"/>
    <property type="match status" value="1"/>
</dbReference>
<dbReference type="NCBIfam" id="NF003207">
    <property type="entry name" value="PRK04171.2-2"/>
    <property type="match status" value="1"/>
</dbReference>
<dbReference type="PANTHER" id="PTHR12636">
    <property type="entry name" value="NEP1/MRA1"/>
    <property type="match status" value="1"/>
</dbReference>
<dbReference type="PANTHER" id="PTHR12636:SF5">
    <property type="entry name" value="RIBOSOMAL RNA SMALL SUBUNIT METHYLTRANSFERASE NEP1"/>
    <property type="match status" value="1"/>
</dbReference>
<dbReference type="Pfam" id="PF03587">
    <property type="entry name" value="EMG1"/>
    <property type="match status" value="1"/>
</dbReference>
<dbReference type="SUPFAM" id="SSF75217">
    <property type="entry name" value="alpha/beta knot"/>
    <property type="match status" value="1"/>
</dbReference>
<accession>Q5JI44</accession>
<evidence type="ECO:0000255" key="1">
    <source>
        <dbReference type="HAMAP-Rule" id="MF_00554"/>
    </source>
</evidence>
<evidence type="ECO:0000305" key="2"/>
<proteinExistence type="inferred from homology"/>
<name>NEP1_THEKO</name>
<keyword id="KW-0489">Methyltransferase</keyword>
<keyword id="KW-1185">Reference proteome</keyword>
<keyword id="KW-0690">Ribosome biogenesis</keyword>
<keyword id="KW-0694">RNA-binding</keyword>
<keyword id="KW-0698">rRNA processing</keyword>
<keyword id="KW-0699">rRNA-binding</keyword>
<keyword id="KW-0949">S-adenosyl-L-methionine</keyword>
<keyword id="KW-0808">Transferase</keyword>
<protein>
    <recommendedName>
        <fullName evidence="1">Ribosomal RNA small subunit methyltransferase Nep1</fullName>
        <ecNumber evidence="1">2.1.1.-</ecNumber>
    </recommendedName>
    <alternativeName>
        <fullName evidence="1">16S rRNA (pseudouridine-N1-)-methyltransferase Nep1</fullName>
    </alternativeName>
</protein>